<name>ESXI_MYCBO</name>
<reference key="1">
    <citation type="journal article" date="2003" name="Proc. Natl. Acad. Sci. U.S.A.">
        <title>The complete genome sequence of Mycobacterium bovis.</title>
        <authorList>
            <person name="Garnier T."/>
            <person name="Eiglmeier K."/>
            <person name="Camus J.-C."/>
            <person name="Medina N."/>
            <person name="Mansoor H."/>
            <person name="Pryor M."/>
            <person name="Duthoy S."/>
            <person name="Grondin S."/>
            <person name="Lacroix C."/>
            <person name="Monsempe C."/>
            <person name="Simon S."/>
            <person name="Harris B."/>
            <person name="Atkin R."/>
            <person name="Doggett J."/>
            <person name="Mayes R."/>
            <person name="Keating L."/>
            <person name="Wheeler P.R."/>
            <person name="Parkhill J."/>
            <person name="Barrell B.G."/>
            <person name="Cole S.T."/>
            <person name="Gordon S.V."/>
            <person name="Hewinson R.G."/>
        </authorList>
    </citation>
    <scope>NUCLEOTIDE SEQUENCE [LARGE SCALE GENOMIC DNA]</scope>
    <source>
        <strain>ATCC BAA-935 / AF2122/97</strain>
    </source>
</reference>
<reference key="2">
    <citation type="journal article" date="2017" name="Genome Announc.">
        <title>Updated reference genome sequence and annotation of Mycobacterium bovis AF2122/97.</title>
        <authorList>
            <person name="Malone K.M."/>
            <person name="Farrell D."/>
            <person name="Stuber T.P."/>
            <person name="Schubert O.T."/>
            <person name="Aebersold R."/>
            <person name="Robbe-Austerman S."/>
            <person name="Gordon S.V."/>
        </authorList>
    </citation>
    <scope>NUCLEOTIDE SEQUENCE [LARGE SCALE GENOMIC DNA]</scope>
    <scope>GENOME REANNOTATION</scope>
    <source>
        <strain>ATCC BAA-935 / AF2122/97</strain>
    </source>
</reference>
<organism>
    <name type="scientific">Mycobacterium bovis (strain ATCC BAA-935 / AF2122/97)</name>
    <dbReference type="NCBI Taxonomy" id="233413"/>
    <lineage>
        <taxon>Bacteria</taxon>
        <taxon>Bacillati</taxon>
        <taxon>Actinomycetota</taxon>
        <taxon>Actinomycetes</taxon>
        <taxon>Mycobacteriales</taxon>
        <taxon>Mycobacteriaceae</taxon>
        <taxon>Mycobacterium</taxon>
        <taxon>Mycobacterium tuberculosis complex</taxon>
    </lineage>
</organism>
<evidence type="ECO:0000250" key="1">
    <source>
        <dbReference type="UniProtKB" id="P0DOA6"/>
    </source>
</evidence>
<evidence type="ECO:0000305" key="2"/>
<comment type="subcellular location">
    <subcellularLocation>
        <location evidence="1">Secreted</location>
    </subcellularLocation>
    <text evidence="1">Probably secreted via the ESX-5 / type VII secretion system (T7SS).</text>
</comment>
<comment type="similarity">
    <text evidence="2">Belongs to the WXG100 family. ESAT-6 subfamily.</text>
</comment>
<protein>
    <recommendedName>
        <fullName evidence="1">ESAT-6-like protein EsxI</fullName>
    </recommendedName>
</protein>
<dbReference type="EMBL" id="LT708304">
    <property type="protein sequence ID" value="SIT99665.1"/>
    <property type="molecule type" value="Genomic_DNA"/>
</dbReference>
<dbReference type="RefSeq" id="NP_854722.1">
    <property type="nucleotide sequence ID" value="NC_002945.3"/>
</dbReference>
<dbReference type="SMR" id="P59802"/>
<dbReference type="KEGG" id="mbo:BQ2027_MB1066C"/>
<dbReference type="PATRIC" id="fig|233413.5.peg.1159"/>
<dbReference type="Proteomes" id="UP000001419">
    <property type="component" value="Chromosome"/>
</dbReference>
<dbReference type="GO" id="GO:0005576">
    <property type="term" value="C:extracellular region"/>
    <property type="evidence" value="ECO:0007669"/>
    <property type="project" value="UniProtKB-SubCell"/>
</dbReference>
<dbReference type="FunFam" id="1.10.287.1060:FF:000004">
    <property type="entry name" value="ESAT-6-like protein EsxI"/>
    <property type="match status" value="1"/>
</dbReference>
<dbReference type="Gene3D" id="1.10.287.1060">
    <property type="entry name" value="ESAT-6-like"/>
    <property type="match status" value="1"/>
</dbReference>
<dbReference type="InterPro" id="IPR009416">
    <property type="entry name" value="ESAT-6-like_Myco"/>
</dbReference>
<dbReference type="InterPro" id="IPR036689">
    <property type="entry name" value="ESAT-6-like_sf"/>
</dbReference>
<dbReference type="InterPro" id="IPR010310">
    <property type="entry name" value="T7SS_ESAT-6-like"/>
</dbReference>
<dbReference type="Pfam" id="PF06013">
    <property type="entry name" value="WXG100"/>
    <property type="match status" value="1"/>
</dbReference>
<dbReference type="PIRSF" id="PIRSF037656">
    <property type="entry name" value="DUF1066"/>
    <property type="match status" value="1"/>
</dbReference>
<dbReference type="SUPFAM" id="SSF140453">
    <property type="entry name" value="EsxAB dimer-like"/>
    <property type="match status" value="1"/>
</dbReference>
<feature type="chain" id="PRO_0000167799" description="ESAT-6-like protein EsxI">
    <location>
        <begin position="1"/>
        <end position="94"/>
    </location>
</feature>
<accession>P59802</accession>
<accession>A0A1R3XXI8</accession>
<accession>X2BGV7</accession>
<gene>
    <name evidence="1" type="primary">esxI</name>
    <name type="ordered locus">BQ2027_MB1066C</name>
</gene>
<keyword id="KW-1185">Reference proteome</keyword>
<keyword id="KW-0964">Secreted</keyword>
<proteinExistence type="inferred from homology"/>
<sequence>MTINYQFGDVDAHGAMIRALAGSLEAEHQAIISDVLTASDFWGGAGSAACQGFITQLGRNFQVIYEQANAHGQKVQAAGNNMAQTDSAVGSSWA</sequence>